<dbReference type="EC" id="2.4.2.22" evidence="1"/>
<dbReference type="EMBL" id="BA000016">
    <property type="protein sequence ID" value="BAB80998.1"/>
    <property type="molecule type" value="Genomic_DNA"/>
</dbReference>
<dbReference type="RefSeq" id="WP_003465824.1">
    <property type="nucleotide sequence ID" value="NC_003366.1"/>
</dbReference>
<dbReference type="SMR" id="Q8XKV0"/>
<dbReference type="STRING" id="195102.gene:10490555"/>
<dbReference type="KEGG" id="cpe:CPE1292"/>
<dbReference type="HOGENOM" id="CLU_099015_0_0_9"/>
<dbReference type="UniPathway" id="UPA00602">
    <property type="reaction ID" value="UER00658"/>
</dbReference>
<dbReference type="Proteomes" id="UP000000818">
    <property type="component" value="Chromosome"/>
</dbReference>
<dbReference type="GO" id="GO:0005737">
    <property type="term" value="C:cytoplasm"/>
    <property type="evidence" value="ECO:0007669"/>
    <property type="project" value="UniProtKB-SubCell"/>
</dbReference>
<dbReference type="GO" id="GO:0000310">
    <property type="term" value="F:xanthine phosphoribosyltransferase activity"/>
    <property type="evidence" value="ECO:0007669"/>
    <property type="project" value="UniProtKB-UniRule"/>
</dbReference>
<dbReference type="GO" id="GO:0006166">
    <property type="term" value="P:purine ribonucleoside salvage"/>
    <property type="evidence" value="ECO:0007669"/>
    <property type="project" value="UniProtKB-KW"/>
</dbReference>
<dbReference type="GO" id="GO:0046110">
    <property type="term" value="P:xanthine metabolic process"/>
    <property type="evidence" value="ECO:0007669"/>
    <property type="project" value="InterPro"/>
</dbReference>
<dbReference type="GO" id="GO:0032265">
    <property type="term" value="P:XMP salvage"/>
    <property type="evidence" value="ECO:0007669"/>
    <property type="project" value="UniProtKB-UniRule"/>
</dbReference>
<dbReference type="CDD" id="cd06223">
    <property type="entry name" value="PRTases_typeI"/>
    <property type="match status" value="1"/>
</dbReference>
<dbReference type="Gene3D" id="3.40.50.2020">
    <property type="match status" value="1"/>
</dbReference>
<dbReference type="HAMAP" id="MF_01184">
    <property type="entry name" value="XPRTase"/>
    <property type="match status" value="1"/>
</dbReference>
<dbReference type="InterPro" id="IPR000836">
    <property type="entry name" value="PRibTrfase_dom"/>
</dbReference>
<dbReference type="InterPro" id="IPR029057">
    <property type="entry name" value="PRTase-like"/>
</dbReference>
<dbReference type="InterPro" id="IPR050118">
    <property type="entry name" value="Pur/Pyrimidine_PRTase"/>
</dbReference>
<dbReference type="InterPro" id="IPR010079">
    <property type="entry name" value="Xanthine_PRibTrfase"/>
</dbReference>
<dbReference type="NCBIfam" id="NF006671">
    <property type="entry name" value="PRK09219.1"/>
    <property type="match status" value="1"/>
</dbReference>
<dbReference type="NCBIfam" id="TIGR01744">
    <property type="entry name" value="XPRTase"/>
    <property type="match status" value="1"/>
</dbReference>
<dbReference type="PANTHER" id="PTHR43864">
    <property type="entry name" value="HYPOXANTHINE/GUANINE PHOSPHORIBOSYLTRANSFERASE"/>
    <property type="match status" value="1"/>
</dbReference>
<dbReference type="PANTHER" id="PTHR43864:SF1">
    <property type="entry name" value="XANTHINE PHOSPHORIBOSYLTRANSFERASE"/>
    <property type="match status" value="1"/>
</dbReference>
<dbReference type="Pfam" id="PF00156">
    <property type="entry name" value="Pribosyltran"/>
    <property type="match status" value="1"/>
</dbReference>
<dbReference type="SUPFAM" id="SSF53271">
    <property type="entry name" value="PRTase-like"/>
    <property type="match status" value="1"/>
</dbReference>
<comment type="function">
    <text evidence="1">Converts the preformed base xanthine, a product of nucleic acid breakdown, to xanthosine 5'-monophosphate (XMP), so it can be reused for RNA or DNA synthesis.</text>
</comment>
<comment type="catalytic activity">
    <reaction evidence="1">
        <text>XMP + diphosphate = xanthine + 5-phospho-alpha-D-ribose 1-diphosphate</text>
        <dbReference type="Rhea" id="RHEA:10800"/>
        <dbReference type="ChEBI" id="CHEBI:17712"/>
        <dbReference type="ChEBI" id="CHEBI:33019"/>
        <dbReference type="ChEBI" id="CHEBI:57464"/>
        <dbReference type="ChEBI" id="CHEBI:58017"/>
        <dbReference type="EC" id="2.4.2.22"/>
    </reaction>
</comment>
<comment type="pathway">
    <text evidence="1">Purine metabolism; XMP biosynthesis via salvage pathway; XMP from xanthine: step 1/1.</text>
</comment>
<comment type="subunit">
    <text evidence="1">Homodimer.</text>
</comment>
<comment type="subcellular location">
    <subcellularLocation>
        <location evidence="1">Cytoplasm</location>
    </subcellularLocation>
</comment>
<comment type="similarity">
    <text evidence="1">Belongs to the purine/pyrimidine phosphoribosyltransferase family. Xpt subfamily.</text>
</comment>
<evidence type="ECO:0000255" key="1">
    <source>
        <dbReference type="HAMAP-Rule" id="MF_01184"/>
    </source>
</evidence>
<gene>
    <name evidence="1" type="primary">xpt2</name>
    <name type="ordered locus">CPE1292</name>
</gene>
<proteinExistence type="inferred from homology"/>
<feature type="chain" id="PRO_0000339688" description="Xanthine phosphoribosyltransferase 2">
    <location>
        <begin position="1"/>
        <end position="192"/>
    </location>
</feature>
<feature type="binding site" evidence="1">
    <location>
        <position position="20"/>
    </location>
    <ligand>
        <name>xanthine</name>
        <dbReference type="ChEBI" id="CHEBI:17712"/>
    </ligand>
</feature>
<feature type="binding site" evidence="1">
    <location>
        <position position="27"/>
    </location>
    <ligand>
        <name>xanthine</name>
        <dbReference type="ChEBI" id="CHEBI:17712"/>
    </ligand>
</feature>
<feature type="binding site" evidence="1">
    <location>
        <begin position="131"/>
        <end position="135"/>
    </location>
    <ligand>
        <name>5-phospho-alpha-D-ribose 1-diphosphate</name>
        <dbReference type="ChEBI" id="CHEBI:58017"/>
    </ligand>
</feature>
<feature type="binding site" evidence="1">
    <location>
        <position position="159"/>
    </location>
    <ligand>
        <name>xanthine</name>
        <dbReference type="ChEBI" id="CHEBI:17712"/>
    </ligand>
</feature>
<reference key="1">
    <citation type="journal article" date="2002" name="Proc. Natl. Acad. Sci. U.S.A.">
        <title>Complete genome sequence of Clostridium perfringens, an anaerobic flesh-eater.</title>
        <authorList>
            <person name="Shimizu T."/>
            <person name="Ohtani K."/>
            <person name="Hirakawa H."/>
            <person name="Ohshima K."/>
            <person name="Yamashita A."/>
            <person name="Shiba T."/>
            <person name="Ogasawara N."/>
            <person name="Hattori M."/>
            <person name="Kuhara S."/>
            <person name="Hayashi H."/>
        </authorList>
    </citation>
    <scope>NUCLEOTIDE SEQUENCE [LARGE SCALE GENOMIC DNA]</scope>
    <source>
        <strain>13 / Type A</strain>
    </source>
</reference>
<accession>Q8XKV0</accession>
<name>XPT2_CLOPE</name>
<sequence length="192" mass="21796">MELLKDKIKKEGRVTEDNILMVDSFLNHQMDVEFFNEVGKEFKDRFKNDQIDKILTIESTGIGLGIITAQYFDNVPVVFGKKIERLPRNKREEVFNSEVYSFTKKTIYNVVVDKKFIKPGEKILIVDDFLANACAVFGLIDVVKQAGAEVVGVGIVIEKGFQSGRAHLEDKGIRVESLVTIDKIEDGEVYFK</sequence>
<keyword id="KW-0963">Cytoplasm</keyword>
<keyword id="KW-0328">Glycosyltransferase</keyword>
<keyword id="KW-0660">Purine salvage</keyword>
<keyword id="KW-1185">Reference proteome</keyword>
<keyword id="KW-0808">Transferase</keyword>
<protein>
    <recommendedName>
        <fullName evidence="1">Xanthine phosphoribosyltransferase 2</fullName>
        <shortName evidence="1">XPRTase 2</shortName>
        <ecNumber evidence="1">2.4.2.22</ecNumber>
    </recommendedName>
</protein>
<organism>
    <name type="scientific">Clostridium perfringens (strain 13 / Type A)</name>
    <dbReference type="NCBI Taxonomy" id="195102"/>
    <lineage>
        <taxon>Bacteria</taxon>
        <taxon>Bacillati</taxon>
        <taxon>Bacillota</taxon>
        <taxon>Clostridia</taxon>
        <taxon>Eubacteriales</taxon>
        <taxon>Clostridiaceae</taxon>
        <taxon>Clostridium</taxon>
    </lineage>
</organism>